<dbReference type="EC" id="3.6.1.-" evidence="1"/>
<dbReference type="EMBL" id="AE016828">
    <property type="protein sequence ID" value="AAO91048.1"/>
    <property type="molecule type" value="Genomic_DNA"/>
</dbReference>
<dbReference type="RefSeq" id="NP_820534.1">
    <property type="nucleotide sequence ID" value="NC_002971.3"/>
</dbReference>
<dbReference type="RefSeq" id="WP_010958294.1">
    <property type="nucleotide sequence ID" value="NC_002971.4"/>
</dbReference>
<dbReference type="SMR" id="Q83BF8"/>
<dbReference type="STRING" id="227377.CBU_1551"/>
<dbReference type="EnsemblBacteria" id="AAO91048">
    <property type="protein sequence ID" value="AAO91048"/>
    <property type="gene ID" value="CBU_1551"/>
</dbReference>
<dbReference type="GeneID" id="1209461"/>
<dbReference type="KEGG" id="cbu:CBU_1551"/>
<dbReference type="PATRIC" id="fig|227377.7.peg.1552"/>
<dbReference type="eggNOG" id="COG0494">
    <property type="taxonomic scope" value="Bacteria"/>
</dbReference>
<dbReference type="HOGENOM" id="CLU_087195_3_0_6"/>
<dbReference type="OrthoDB" id="9816040at2"/>
<dbReference type="Proteomes" id="UP000002671">
    <property type="component" value="Chromosome"/>
</dbReference>
<dbReference type="GO" id="GO:0005737">
    <property type="term" value="C:cytoplasm"/>
    <property type="evidence" value="ECO:0000318"/>
    <property type="project" value="GO_Central"/>
</dbReference>
<dbReference type="GO" id="GO:0034353">
    <property type="term" value="F:mRNA 5'-diphosphatase activity"/>
    <property type="evidence" value="ECO:0000318"/>
    <property type="project" value="GO_Central"/>
</dbReference>
<dbReference type="GO" id="GO:0006402">
    <property type="term" value="P:mRNA catabolic process"/>
    <property type="evidence" value="ECO:0000318"/>
    <property type="project" value="GO_Central"/>
</dbReference>
<dbReference type="CDD" id="cd03671">
    <property type="entry name" value="NUDIX_Ap4A_hydrolase_plant_like"/>
    <property type="match status" value="1"/>
</dbReference>
<dbReference type="Gene3D" id="3.90.79.10">
    <property type="entry name" value="Nucleoside Triphosphate Pyrophosphohydrolase"/>
    <property type="match status" value="1"/>
</dbReference>
<dbReference type="HAMAP" id="MF_00298">
    <property type="entry name" value="Nudix_RppH"/>
    <property type="match status" value="1"/>
</dbReference>
<dbReference type="InterPro" id="IPR015797">
    <property type="entry name" value="NUDIX_hydrolase-like_dom_sf"/>
</dbReference>
<dbReference type="InterPro" id="IPR020084">
    <property type="entry name" value="NUDIX_hydrolase_CS"/>
</dbReference>
<dbReference type="InterPro" id="IPR000086">
    <property type="entry name" value="NUDIX_hydrolase_dom"/>
</dbReference>
<dbReference type="InterPro" id="IPR022927">
    <property type="entry name" value="RppH"/>
</dbReference>
<dbReference type="NCBIfam" id="NF001937">
    <property type="entry name" value="PRK00714.1-4"/>
    <property type="match status" value="1"/>
</dbReference>
<dbReference type="NCBIfam" id="NF001938">
    <property type="entry name" value="PRK00714.1-5"/>
    <property type="match status" value="1"/>
</dbReference>
<dbReference type="PANTHER" id="PTHR23114">
    <property type="entry name" value="M7GPPPN-MRNA HYDROLASE"/>
    <property type="match status" value="1"/>
</dbReference>
<dbReference type="PANTHER" id="PTHR23114:SF17">
    <property type="entry name" value="M7GPPPN-MRNA HYDROLASE"/>
    <property type="match status" value="1"/>
</dbReference>
<dbReference type="Pfam" id="PF00293">
    <property type="entry name" value="NUDIX"/>
    <property type="match status" value="1"/>
</dbReference>
<dbReference type="SUPFAM" id="SSF55811">
    <property type="entry name" value="Nudix"/>
    <property type="match status" value="1"/>
</dbReference>
<dbReference type="PROSITE" id="PS51462">
    <property type="entry name" value="NUDIX"/>
    <property type="match status" value="1"/>
</dbReference>
<dbReference type="PROSITE" id="PS00893">
    <property type="entry name" value="NUDIX_BOX"/>
    <property type="match status" value="1"/>
</dbReference>
<gene>
    <name evidence="1" type="primary">rppH</name>
    <name evidence="1" type="synonym">nudH</name>
    <name type="ordered locus">CBU_1551</name>
</gene>
<reference key="1">
    <citation type="journal article" date="2003" name="Proc. Natl. Acad. Sci. U.S.A.">
        <title>Complete genome sequence of the Q-fever pathogen, Coxiella burnetii.</title>
        <authorList>
            <person name="Seshadri R."/>
            <person name="Paulsen I.T."/>
            <person name="Eisen J.A."/>
            <person name="Read T.D."/>
            <person name="Nelson K.E."/>
            <person name="Nelson W.C."/>
            <person name="Ward N.L."/>
            <person name="Tettelin H."/>
            <person name="Davidsen T.M."/>
            <person name="Beanan M.J."/>
            <person name="DeBoy R.T."/>
            <person name="Daugherty S.C."/>
            <person name="Brinkac L.M."/>
            <person name="Madupu R."/>
            <person name="Dodson R.J."/>
            <person name="Khouri H.M."/>
            <person name="Lee K.H."/>
            <person name="Carty H.A."/>
            <person name="Scanlan D."/>
            <person name="Heinzen R.A."/>
            <person name="Thompson H.A."/>
            <person name="Samuel J.E."/>
            <person name="Fraser C.M."/>
            <person name="Heidelberg J.F."/>
        </authorList>
    </citation>
    <scope>NUCLEOTIDE SEQUENCE [LARGE SCALE GENOMIC DNA]</scope>
    <source>
        <strain>RSA 493 / Nine Mile phase I</strain>
    </source>
</reference>
<proteinExistence type="inferred from homology"/>
<name>RPPH_COXBU</name>
<accession>Q83BF8</accession>
<evidence type="ECO:0000255" key="1">
    <source>
        <dbReference type="HAMAP-Rule" id="MF_00298"/>
    </source>
</evidence>
<evidence type="ECO:0000305" key="2"/>
<comment type="function">
    <text evidence="1">Accelerates the degradation of transcripts by removing pyrophosphate from the 5'-end of triphosphorylated RNA, leading to a more labile monophosphorylated state that can stimulate subsequent ribonuclease cleavage.</text>
</comment>
<comment type="cofactor">
    <cofactor evidence="1">
        <name>a divalent metal cation</name>
        <dbReference type="ChEBI" id="CHEBI:60240"/>
    </cofactor>
</comment>
<comment type="similarity">
    <text evidence="2">In the C-terminal section; belongs to the Nudix hydrolase family. RppH subfamily.</text>
</comment>
<organism>
    <name type="scientific">Coxiella burnetii (strain RSA 493 / Nine Mile phase I)</name>
    <dbReference type="NCBI Taxonomy" id="227377"/>
    <lineage>
        <taxon>Bacteria</taxon>
        <taxon>Pseudomonadati</taxon>
        <taxon>Pseudomonadota</taxon>
        <taxon>Gammaproteobacteria</taxon>
        <taxon>Legionellales</taxon>
        <taxon>Coxiellaceae</taxon>
        <taxon>Coxiella</taxon>
    </lineage>
</organism>
<sequence length="228" mass="26730">MEKRSGIGRLYQGSFFNRYSRAGGNPGAPSVRCARVRGDDGVLVFTPFGNDRRGTSSTTMKQWVKMMNDIVIDKRGFRLGVGMVIMNRQGELLWGRRVGNPDAWQFPQGGLLPNETLREALNRELDEEVGLSPHDVIYLRETRQWISYRLPKKFRRPEHRGPVCIGQRQKWFLLQFTGKDDAISLDHCSQPEFDQWRWVDYWYPVDHVVEFKRDVYQKVLTEFAEFIR</sequence>
<keyword id="KW-0378">Hydrolase</keyword>
<keyword id="KW-1185">Reference proteome</keyword>
<protein>
    <recommendedName>
        <fullName evidence="1">RNA pyrophosphohydrolase</fullName>
        <ecNumber evidence="1">3.6.1.-</ecNumber>
    </recommendedName>
    <alternativeName>
        <fullName evidence="1">(Di)nucleoside polyphosphate hydrolase</fullName>
    </alternativeName>
</protein>
<feature type="chain" id="PRO_0000057004" description="RNA pyrophosphohydrolase">
    <location>
        <begin position="1"/>
        <end position="228"/>
    </location>
</feature>
<feature type="domain" description="Nudix hydrolase" evidence="1">
    <location>
        <begin position="76"/>
        <end position="221"/>
    </location>
</feature>
<feature type="region of interest" description="Unknown">
    <location>
        <begin position="1"/>
        <end position="70"/>
    </location>
</feature>
<feature type="region of interest" description="RppH domain">
    <location>
        <begin position="71"/>
        <end position="228"/>
    </location>
</feature>
<feature type="short sequence motif" description="Nudix box">
    <location>
        <begin position="109"/>
        <end position="130"/>
    </location>
</feature>